<comment type="catalytic activity">
    <reaction evidence="4">
        <text>ATP + H2O = ADP + phosphate + H(+)</text>
        <dbReference type="Rhea" id="RHEA:13065"/>
        <dbReference type="ChEBI" id="CHEBI:15377"/>
        <dbReference type="ChEBI" id="CHEBI:15378"/>
        <dbReference type="ChEBI" id="CHEBI:30616"/>
        <dbReference type="ChEBI" id="CHEBI:43474"/>
        <dbReference type="ChEBI" id="CHEBI:456216"/>
        <dbReference type="EC" id="3.6.4.12"/>
    </reaction>
</comment>
<comment type="subcellular location">
    <subcellularLocation>
        <location evidence="1">Plastid</location>
        <location evidence="1">Chloroplast</location>
    </subcellularLocation>
</comment>
<comment type="alternative products">
    <event type="alternative initiation"/>
    <isoform>
        <id>F4JFJ3-1</id>
        <name>1</name>
        <sequence type="displayed"/>
    </isoform>
    <isoform>
        <id>F4JFJ3-2</id>
        <name>2</name>
        <sequence type="described" ref="VSP_058035"/>
    </isoform>
</comment>
<comment type="similarity">
    <text evidence="4">Belongs to the helicase family.</text>
</comment>
<evidence type="ECO:0000255" key="1"/>
<evidence type="ECO:0000255" key="2">
    <source>
        <dbReference type="PROSITE-ProRule" id="PRU00541"/>
    </source>
</evidence>
<evidence type="ECO:0000255" key="3">
    <source>
        <dbReference type="PROSITE-ProRule" id="PRU00542"/>
    </source>
</evidence>
<evidence type="ECO:0000305" key="4"/>
<evidence type="ECO:0000312" key="5">
    <source>
        <dbReference type="Araport" id="AT3G02060"/>
    </source>
</evidence>
<evidence type="ECO:0000312" key="6">
    <source>
        <dbReference type="EMBL" id="AAF14851.1"/>
    </source>
</evidence>
<accession>F4JFJ3</accession>
<accession>Q8H0S6</accession>
<accession>Q94JY9</accession>
<accession>Q9SGA4</accession>
<gene>
    <name evidence="5" type="ordered locus">At3g02060</name>
    <name evidence="6" type="ORF">F1C9.16</name>
</gene>
<sequence>MMSLLPNPDPITVPLVLKLCSFPPPRRLFSLRLRRFTRKSSSLLPLVAVSSLSATAAKPTRWREKPELAESDSISLLNERIRRDLGKRETARPAMDSEEAEKYIHMVKEQQERGLQKLKGIRQGTKAAGDGAFSYKVDPYSLLSGDYVVHKKVGIGRFVGIKFDVPKDSSEPLEYVFIEYADGMAKLPLKQASRLLYRYNLPNETKRPRTLSRLSDTSVWERRKTKGKVAIQKMVVDLMELYLHRLRQKRYPYPKNPIMADFAAQFPYNATPDQKQAFLDVEKDLTERETPMDRLICGDVGFGKTEVALRAIFCVVSTGKQAMVLAPTIVLAKQHYDVISERFSLYPHIKVGLLSRFQTKAEKEEYLEMIKTGHLNIIVGTHSLLGSRVVYSNLGLLVVDEEQRFGVKQKEKIASFKTSVDVLTLSATPIPRTLYLALTGFRDASLISTPPPERIPIKTHLSSFRKEKVIEAIKNELDRGGQVFYVLPRIKGLEEVMDFLEEAFPDIDIAMAHGKQYSKQLEETMERFAQGKIKILICTNIVESGLDIQNANTIIIQDVQQFGLAQLYQLRGRVGRADKEAHAYLFYPDKSLLSDQALERLSALEECRELGQGFQLAEKDMGIRGFGTIFGEQQTGDVGNVGIDLFFEMLFESLSKVEELRIFSVPYDLVKIDININPRLPSEYVNYLENPMEIIHEAEKAAEKDMWSLMQFTENLRRQYGKEPYSMEIILKKLYVRRMAADLGVNRIYASGKMVVMKTNMSKKVFKLITDSMTCDVYRSSLIYEGDQIMAELLLELPREQLLNWMFQCLSELHASLPALIKY</sequence>
<reference key="1">
    <citation type="journal article" date="2000" name="Nature">
        <title>Sequence and analysis of chromosome 3 of the plant Arabidopsis thaliana.</title>
        <authorList>
            <person name="Salanoubat M."/>
            <person name="Lemcke K."/>
            <person name="Rieger M."/>
            <person name="Ansorge W."/>
            <person name="Unseld M."/>
            <person name="Fartmann B."/>
            <person name="Valle G."/>
            <person name="Bloecker H."/>
            <person name="Perez-Alonso M."/>
            <person name="Obermaier B."/>
            <person name="Delseny M."/>
            <person name="Boutry M."/>
            <person name="Grivell L.A."/>
            <person name="Mache R."/>
            <person name="Puigdomenech P."/>
            <person name="De Simone V."/>
            <person name="Choisne N."/>
            <person name="Artiguenave F."/>
            <person name="Robert C."/>
            <person name="Brottier P."/>
            <person name="Wincker P."/>
            <person name="Cattolico L."/>
            <person name="Weissenbach J."/>
            <person name="Saurin W."/>
            <person name="Quetier F."/>
            <person name="Schaefer M."/>
            <person name="Mueller-Auer S."/>
            <person name="Gabel C."/>
            <person name="Fuchs M."/>
            <person name="Benes V."/>
            <person name="Wurmbach E."/>
            <person name="Drzonek H."/>
            <person name="Erfle H."/>
            <person name="Jordan N."/>
            <person name="Bangert S."/>
            <person name="Wiedelmann R."/>
            <person name="Kranz H."/>
            <person name="Voss H."/>
            <person name="Holland R."/>
            <person name="Brandt P."/>
            <person name="Nyakatura G."/>
            <person name="Vezzi A."/>
            <person name="D'Angelo M."/>
            <person name="Pallavicini A."/>
            <person name="Toppo S."/>
            <person name="Simionati B."/>
            <person name="Conrad A."/>
            <person name="Hornischer K."/>
            <person name="Kauer G."/>
            <person name="Loehnert T.-H."/>
            <person name="Nordsiek G."/>
            <person name="Reichelt J."/>
            <person name="Scharfe M."/>
            <person name="Schoen O."/>
            <person name="Bargues M."/>
            <person name="Terol J."/>
            <person name="Climent J."/>
            <person name="Navarro P."/>
            <person name="Collado C."/>
            <person name="Perez-Perez A."/>
            <person name="Ottenwaelder B."/>
            <person name="Duchemin D."/>
            <person name="Cooke R."/>
            <person name="Laudie M."/>
            <person name="Berger-Llauro C."/>
            <person name="Purnelle B."/>
            <person name="Masuy D."/>
            <person name="de Haan M."/>
            <person name="Maarse A.C."/>
            <person name="Alcaraz J.-P."/>
            <person name="Cottet A."/>
            <person name="Casacuberta E."/>
            <person name="Monfort A."/>
            <person name="Argiriou A."/>
            <person name="Flores M."/>
            <person name="Liguori R."/>
            <person name="Vitale D."/>
            <person name="Mannhaupt G."/>
            <person name="Haase D."/>
            <person name="Schoof H."/>
            <person name="Rudd S."/>
            <person name="Zaccaria P."/>
            <person name="Mewes H.-W."/>
            <person name="Mayer K.F.X."/>
            <person name="Kaul S."/>
            <person name="Town C.D."/>
            <person name="Koo H.L."/>
            <person name="Tallon L.J."/>
            <person name="Jenkins J."/>
            <person name="Rooney T."/>
            <person name="Rizzo M."/>
            <person name="Walts A."/>
            <person name="Utterback T."/>
            <person name="Fujii C.Y."/>
            <person name="Shea T.P."/>
            <person name="Creasy T.H."/>
            <person name="Haas B."/>
            <person name="Maiti R."/>
            <person name="Wu D."/>
            <person name="Peterson J."/>
            <person name="Van Aken S."/>
            <person name="Pai G."/>
            <person name="Militscher J."/>
            <person name="Sellers P."/>
            <person name="Gill J.E."/>
            <person name="Feldblyum T.V."/>
            <person name="Preuss D."/>
            <person name="Lin X."/>
            <person name="Nierman W.C."/>
            <person name="Salzberg S.L."/>
            <person name="White O."/>
            <person name="Venter J.C."/>
            <person name="Fraser C.M."/>
            <person name="Kaneko T."/>
            <person name="Nakamura Y."/>
            <person name="Sato S."/>
            <person name="Kato T."/>
            <person name="Asamizu E."/>
            <person name="Sasamoto S."/>
            <person name="Kimura T."/>
            <person name="Idesawa K."/>
            <person name="Kawashima K."/>
            <person name="Kishida Y."/>
            <person name="Kiyokawa C."/>
            <person name="Kohara M."/>
            <person name="Matsumoto M."/>
            <person name="Matsuno A."/>
            <person name="Muraki A."/>
            <person name="Nakayama S."/>
            <person name="Nakazaki N."/>
            <person name="Shinpo S."/>
            <person name="Takeuchi C."/>
            <person name="Wada T."/>
            <person name="Watanabe A."/>
            <person name="Yamada M."/>
            <person name="Yasuda M."/>
            <person name="Tabata S."/>
        </authorList>
    </citation>
    <scope>NUCLEOTIDE SEQUENCE [LARGE SCALE GENOMIC DNA]</scope>
    <source>
        <strain>cv. Columbia</strain>
    </source>
</reference>
<reference key="2">
    <citation type="journal article" date="2017" name="Plant J.">
        <title>Araport11: a complete reannotation of the Arabidopsis thaliana reference genome.</title>
        <authorList>
            <person name="Cheng C.Y."/>
            <person name="Krishnakumar V."/>
            <person name="Chan A.P."/>
            <person name="Thibaud-Nissen F."/>
            <person name="Schobel S."/>
            <person name="Town C.D."/>
        </authorList>
    </citation>
    <scope>GENOME REANNOTATION</scope>
    <source>
        <strain>cv. Columbia</strain>
    </source>
</reference>
<reference key="3">
    <citation type="journal article" date="2003" name="Science">
        <title>Empirical analysis of transcriptional activity in the Arabidopsis genome.</title>
        <authorList>
            <person name="Yamada K."/>
            <person name="Lim J."/>
            <person name="Dale J.M."/>
            <person name="Chen H."/>
            <person name="Shinn P."/>
            <person name="Palm C.J."/>
            <person name="Southwick A.M."/>
            <person name="Wu H.C."/>
            <person name="Kim C.J."/>
            <person name="Nguyen M."/>
            <person name="Pham P.K."/>
            <person name="Cheuk R.F."/>
            <person name="Karlin-Newmann G."/>
            <person name="Liu S.X."/>
            <person name="Lam B."/>
            <person name="Sakano H."/>
            <person name="Wu T."/>
            <person name="Yu G."/>
            <person name="Miranda M."/>
            <person name="Quach H.L."/>
            <person name="Tripp M."/>
            <person name="Chang C.H."/>
            <person name="Lee J.M."/>
            <person name="Toriumi M.J."/>
            <person name="Chan M.M."/>
            <person name="Tang C.C."/>
            <person name="Onodera C.S."/>
            <person name="Deng J.M."/>
            <person name="Akiyama K."/>
            <person name="Ansari Y."/>
            <person name="Arakawa T."/>
            <person name="Banh J."/>
            <person name="Banno F."/>
            <person name="Bowser L."/>
            <person name="Brooks S.Y."/>
            <person name="Carninci P."/>
            <person name="Chao Q."/>
            <person name="Choy N."/>
            <person name="Enju A."/>
            <person name="Goldsmith A.D."/>
            <person name="Gurjal M."/>
            <person name="Hansen N.F."/>
            <person name="Hayashizaki Y."/>
            <person name="Johnson-Hopson C."/>
            <person name="Hsuan V.W."/>
            <person name="Iida K."/>
            <person name="Karnes M."/>
            <person name="Khan S."/>
            <person name="Koesema E."/>
            <person name="Ishida J."/>
            <person name="Jiang P.X."/>
            <person name="Jones T."/>
            <person name="Kawai J."/>
            <person name="Kamiya A."/>
            <person name="Meyers C."/>
            <person name="Nakajima M."/>
            <person name="Narusaka M."/>
            <person name="Seki M."/>
            <person name="Sakurai T."/>
            <person name="Satou M."/>
            <person name="Tamse R."/>
            <person name="Vaysberg M."/>
            <person name="Wallender E.K."/>
            <person name="Wong C."/>
            <person name="Yamamura Y."/>
            <person name="Yuan S."/>
            <person name="Shinozaki K."/>
            <person name="Davis R.W."/>
            <person name="Theologis A."/>
            <person name="Ecker J.R."/>
        </authorList>
    </citation>
    <scope>NUCLEOTIDE SEQUENCE [LARGE SCALE MRNA] (ISOFORMS 1 AND 2)</scope>
    <source>
        <strain>cv. Columbia</strain>
    </source>
</reference>
<reference key="4">
    <citation type="journal article" date="2013" name="PLoS ONE">
        <title>Genome-wide comparative in silico analysis of the RNA helicase gene family in Zea mays and Glycine max: a comparison with Arabidopsis and Oryza sativa.</title>
        <authorList>
            <person name="Xu R."/>
            <person name="Zhang S."/>
            <person name="Huang J."/>
            <person name="Zheng C."/>
        </authorList>
    </citation>
    <scope>GENE FAMILY</scope>
</reference>
<keyword id="KW-0024">Alternative initiation</keyword>
<keyword id="KW-0067">ATP-binding</keyword>
<keyword id="KW-0150">Chloroplast</keyword>
<keyword id="KW-0238">DNA-binding</keyword>
<keyword id="KW-0347">Helicase</keyword>
<keyword id="KW-0378">Hydrolase</keyword>
<keyword id="KW-0547">Nucleotide-binding</keyword>
<keyword id="KW-0934">Plastid</keyword>
<keyword id="KW-1185">Reference proteome</keyword>
<keyword id="KW-0809">Transit peptide</keyword>
<dbReference type="EC" id="3.6.4.12" evidence="4"/>
<dbReference type="EMBL" id="AC011664">
    <property type="protein sequence ID" value="AAF14851.1"/>
    <property type="molecule type" value="Genomic_DNA"/>
</dbReference>
<dbReference type="EMBL" id="CP002686">
    <property type="protein sequence ID" value="AEE73754.1"/>
    <property type="molecule type" value="Genomic_DNA"/>
</dbReference>
<dbReference type="EMBL" id="CP002686">
    <property type="protein sequence ID" value="AEE73755.1"/>
    <property type="molecule type" value="Genomic_DNA"/>
</dbReference>
<dbReference type="EMBL" id="CP002686">
    <property type="protein sequence ID" value="ANM64108.1"/>
    <property type="molecule type" value="Genomic_DNA"/>
</dbReference>
<dbReference type="EMBL" id="AF370520">
    <property type="protein sequence ID" value="AAK43897.1"/>
    <property type="molecule type" value="mRNA"/>
</dbReference>
<dbReference type="EMBL" id="BT002188">
    <property type="protein sequence ID" value="AAN72199.1"/>
    <property type="molecule type" value="mRNA"/>
</dbReference>
<dbReference type="RefSeq" id="NP_001078092.1">
    <molecule id="F4JFJ3-2"/>
    <property type="nucleotide sequence ID" value="NM_001084623.1"/>
</dbReference>
<dbReference type="RefSeq" id="NP_001326158.1">
    <molecule id="F4JFJ3-1"/>
    <property type="nucleotide sequence ID" value="NM_001337379.1"/>
</dbReference>
<dbReference type="RefSeq" id="NP_566160.1">
    <molecule id="F4JFJ3-1"/>
    <property type="nucleotide sequence ID" value="NM_111072.2"/>
</dbReference>
<dbReference type="SMR" id="F4JFJ3"/>
<dbReference type="FunCoup" id="F4JFJ3">
    <property type="interactions" value="467"/>
</dbReference>
<dbReference type="STRING" id="3702.F4JFJ3"/>
<dbReference type="GlyGen" id="F4JFJ3">
    <property type="glycosylation" value="2 sites"/>
</dbReference>
<dbReference type="PaxDb" id="3702-AT3G02060.1"/>
<dbReference type="ProMEX" id="F4JFJ3"/>
<dbReference type="ProteomicsDB" id="234631">
    <molecule id="F4JFJ3-1"/>
</dbReference>
<dbReference type="EnsemblPlants" id="AT3G02060.1">
    <molecule id="F4JFJ3-1"/>
    <property type="protein sequence ID" value="AT3G02060.1"/>
    <property type="gene ID" value="AT3G02060"/>
</dbReference>
<dbReference type="EnsemblPlants" id="AT3G02060.2">
    <molecule id="F4JFJ3-2"/>
    <property type="protein sequence ID" value="AT3G02060.2"/>
    <property type="gene ID" value="AT3G02060"/>
</dbReference>
<dbReference type="EnsemblPlants" id="AT3G02060.3">
    <molecule id="F4JFJ3-1"/>
    <property type="protein sequence ID" value="AT3G02060.3"/>
    <property type="gene ID" value="AT3G02060"/>
</dbReference>
<dbReference type="GeneID" id="821294"/>
<dbReference type="Gramene" id="AT3G02060.1">
    <molecule id="F4JFJ3-1"/>
    <property type="protein sequence ID" value="AT3G02060.1"/>
    <property type="gene ID" value="AT3G02060"/>
</dbReference>
<dbReference type="Gramene" id="AT3G02060.2">
    <molecule id="F4JFJ3-2"/>
    <property type="protein sequence ID" value="AT3G02060.2"/>
    <property type="gene ID" value="AT3G02060"/>
</dbReference>
<dbReference type="Gramene" id="AT3G02060.3">
    <molecule id="F4JFJ3-1"/>
    <property type="protein sequence ID" value="AT3G02060.3"/>
    <property type="gene ID" value="AT3G02060"/>
</dbReference>
<dbReference type="KEGG" id="ath:AT3G02060"/>
<dbReference type="Araport" id="AT3G02060"/>
<dbReference type="TAIR" id="AT3G02060"/>
<dbReference type="eggNOG" id="KOG0344">
    <property type="taxonomic scope" value="Eukaryota"/>
</dbReference>
<dbReference type="InParanoid" id="F4JFJ3"/>
<dbReference type="OMA" id="QVYYIYN"/>
<dbReference type="OrthoDB" id="416741at2759"/>
<dbReference type="PRO" id="PR:F4JFJ3"/>
<dbReference type="Proteomes" id="UP000006548">
    <property type="component" value="Chromosome 3"/>
</dbReference>
<dbReference type="ExpressionAtlas" id="F4JFJ3">
    <property type="expression patterns" value="baseline and differential"/>
</dbReference>
<dbReference type="GO" id="GO:0009507">
    <property type="term" value="C:chloroplast"/>
    <property type="evidence" value="ECO:0007669"/>
    <property type="project" value="UniProtKB-SubCell"/>
</dbReference>
<dbReference type="GO" id="GO:0005524">
    <property type="term" value="F:ATP binding"/>
    <property type="evidence" value="ECO:0007669"/>
    <property type="project" value="UniProtKB-KW"/>
</dbReference>
<dbReference type="GO" id="GO:0016887">
    <property type="term" value="F:ATP hydrolysis activity"/>
    <property type="evidence" value="ECO:0007669"/>
    <property type="project" value="RHEA"/>
</dbReference>
<dbReference type="GO" id="GO:0003677">
    <property type="term" value="F:DNA binding"/>
    <property type="evidence" value="ECO:0007669"/>
    <property type="project" value="UniProtKB-KW"/>
</dbReference>
<dbReference type="GO" id="GO:0004386">
    <property type="term" value="F:helicase activity"/>
    <property type="evidence" value="ECO:0007669"/>
    <property type="project" value="UniProtKB-KW"/>
</dbReference>
<dbReference type="CDD" id="cd17991">
    <property type="entry name" value="DEXHc_TRCF"/>
    <property type="match status" value="1"/>
</dbReference>
<dbReference type="Gene3D" id="2.40.10.170">
    <property type="match status" value="1"/>
</dbReference>
<dbReference type="Gene3D" id="3.40.50.300">
    <property type="entry name" value="P-loop containing nucleotide triphosphate hydrolases"/>
    <property type="match status" value="2"/>
</dbReference>
<dbReference type="Gene3D" id="3.90.1150.50">
    <property type="entry name" value="Transcription-repair-coupling factor, D7 domain"/>
    <property type="match status" value="1"/>
</dbReference>
<dbReference type="InterPro" id="IPR003711">
    <property type="entry name" value="CarD-like/TRCF_RID"/>
</dbReference>
<dbReference type="InterPro" id="IPR036101">
    <property type="entry name" value="CarD-like/TRCF_RID_sf"/>
</dbReference>
<dbReference type="InterPro" id="IPR011545">
    <property type="entry name" value="DEAD/DEAH_box_helicase_dom"/>
</dbReference>
<dbReference type="InterPro" id="IPR014001">
    <property type="entry name" value="Helicase_ATP-bd"/>
</dbReference>
<dbReference type="InterPro" id="IPR001650">
    <property type="entry name" value="Helicase_C-like"/>
</dbReference>
<dbReference type="InterPro" id="IPR027417">
    <property type="entry name" value="P-loop_NTPase"/>
</dbReference>
<dbReference type="InterPro" id="IPR037235">
    <property type="entry name" value="TRCF-like_C_D7"/>
</dbReference>
<dbReference type="PANTHER" id="PTHR14025">
    <property type="entry name" value="FANCONI ANEMIA GROUP M FANCM FAMILY MEMBER"/>
    <property type="match status" value="1"/>
</dbReference>
<dbReference type="PANTHER" id="PTHR14025:SF29">
    <property type="entry name" value="TRANSCRIPTION-REPAIR-COUPLING FACTOR"/>
    <property type="match status" value="1"/>
</dbReference>
<dbReference type="Pfam" id="PF02559">
    <property type="entry name" value="CarD_TRCF_RID"/>
    <property type="match status" value="1"/>
</dbReference>
<dbReference type="Pfam" id="PF00270">
    <property type="entry name" value="DEAD"/>
    <property type="match status" value="1"/>
</dbReference>
<dbReference type="Pfam" id="PF00271">
    <property type="entry name" value="Helicase_C"/>
    <property type="match status" value="1"/>
</dbReference>
<dbReference type="SMART" id="SM01058">
    <property type="entry name" value="CarD_TRCF"/>
    <property type="match status" value="1"/>
</dbReference>
<dbReference type="SMART" id="SM00487">
    <property type="entry name" value="DEXDc"/>
    <property type="match status" value="1"/>
</dbReference>
<dbReference type="SMART" id="SM00490">
    <property type="entry name" value="HELICc"/>
    <property type="match status" value="1"/>
</dbReference>
<dbReference type="SUPFAM" id="SSF141259">
    <property type="entry name" value="CarD-like"/>
    <property type="match status" value="1"/>
</dbReference>
<dbReference type="SUPFAM" id="SSF52540">
    <property type="entry name" value="P-loop containing nucleoside triphosphate hydrolases"/>
    <property type="match status" value="1"/>
</dbReference>
<dbReference type="SUPFAM" id="SSF143517">
    <property type="entry name" value="TRCF domain-like"/>
    <property type="match status" value="1"/>
</dbReference>
<dbReference type="PROSITE" id="PS51192">
    <property type="entry name" value="HELICASE_ATP_BIND_1"/>
    <property type="match status" value="1"/>
</dbReference>
<dbReference type="PROSITE" id="PS51194">
    <property type="entry name" value="HELICASE_CTER"/>
    <property type="match status" value="1"/>
</dbReference>
<feature type="transit peptide" description="Chloroplast" evidence="1">
    <location>
        <begin position="1"/>
        <end position="53"/>
    </location>
</feature>
<feature type="chain" id="PRO_0000435303" description="ATP-dependent DNA helicase At3g02060, chloroplastic">
    <location>
        <begin position="54"/>
        <end position="823"/>
    </location>
</feature>
<feature type="domain" description="Helicase ATP-binding" evidence="2">
    <location>
        <begin position="285"/>
        <end position="447"/>
    </location>
</feature>
<feature type="domain" description="Helicase C-terminal" evidence="3">
    <location>
        <begin position="465"/>
        <end position="622"/>
    </location>
</feature>
<feature type="short sequence motif" description="DEEQ box" evidence="4">
    <location>
        <begin position="400"/>
        <end position="403"/>
    </location>
</feature>
<feature type="binding site" evidence="2">
    <location>
        <begin position="298"/>
        <end position="305"/>
    </location>
    <ligand>
        <name>ATP</name>
        <dbReference type="ChEBI" id="CHEBI:30616"/>
    </ligand>
</feature>
<feature type="splice variant" id="VSP_058035" description="In isoform 2.">
    <location>
        <position position="1"/>
    </location>
</feature>
<feature type="sequence conflict" description="In Ref. 3; AAK43897/AAN72199." evidence="4" ref="3">
    <original>E</original>
    <variation>G</variation>
    <location>
        <position position="240"/>
    </location>
</feature>
<protein>
    <recommendedName>
        <fullName>ATP-dependent DNA helicase At3g02060, chloroplastic</fullName>
        <ecNumber evidence="4">3.6.4.12</ecNumber>
    </recommendedName>
</protein>
<proteinExistence type="evidence at transcript level"/>
<name>Y3206_ARATH</name>
<organism>
    <name type="scientific">Arabidopsis thaliana</name>
    <name type="common">Mouse-ear cress</name>
    <dbReference type="NCBI Taxonomy" id="3702"/>
    <lineage>
        <taxon>Eukaryota</taxon>
        <taxon>Viridiplantae</taxon>
        <taxon>Streptophyta</taxon>
        <taxon>Embryophyta</taxon>
        <taxon>Tracheophyta</taxon>
        <taxon>Spermatophyta</taxon>
        <taxon>Magnoliopsida</taxon>
        <taxon>eudicotyledons</taxon>
        <taxon>Gunneridae</taxon>
        <taxon>Pentapetalae</taxon>
        <taxon>rosids</taxon>
        <taxon>malvids</taxon>
        <taxon>Brassicales</taxon>
        <taxon>Brassicaceae</taxon>
        <taxon>Camelineae</taxon>
        <taxon>Arabidopsis</taxon>
    </lineage>
</organism>